<proteinExistence type="inferred from homology"/>
<gene>
    <name evidence="1" type="primary">GST</name>
    <name type="ORF">PY05088</name>
</gene>
<name>GST_PLAYO</name>
<evidence type="ECO:0000250" key="1">
    <source>
        <dbReference type="UniProtKB" id="Q8ILQ7"/>
    </source>
</evidence>
<evidence type="ECO:0000255" key="2"/>
<evidence type="ECO:0000305" key="3"/>
<protein>
    <recommendedName>
        <fullName evidence="1">Glutathione S-transferase</fullName>
        <ecNumber evidence="1">2.5.1.18</ecNumber>
    </recommendedName>
</protein>
<sequence>MTYLYNFFFFFFFFFSRGKAELIRLIFAYLQVKYTDIRFGVNGDAFAEFNNFKKEKEIPFNQVPILEIGGLILAQSQAIVRYLSKKYNISGNGELNEFYADMIFCGVQDIHYKFNNTNLFKQNETTFLNEELPKWSGYFEKLLQKNNTNYFVGDTITYADLAVFNLYDDIESKYPNCLKNFPLLKAHIELISNIPNIKHYIANRKESVY</sequence>
<comment type="function">
    <text evidence="1">Conjugation of reduced glutathione to a wide number of exogenous and endogenous hydrophobic electrophiles. May also function as a storage protein or ligandin for parasitotoxic ferriprotoporphyrin IX (hemin).</text>
</comment>
<comment type="catalytic activity">
    <reaction evidence="1">
        <text>RX + glutathione = an S-substituted glutathione + a halide anion + H(+)</text>
        <dbReference type="Rhea" id="RHEA:16437"/>
        <dbReference type="ChEBI" id="CHEBI:15378"/>
        <dbReference type="ChEBI" id="CHEBI:16042"/>
        <dbReference type="ChEBI" id="CHEBI:17792"/>
        <dbReference type="ChEBI" id="CHEBI:57925"/>
        <dbReference type="ChEBI" id="CHEBI:90779"/>
        <dbReference type="EC" id="2.5.1.18"/>
    </reaction>
</comment>
<comment type="subunit">
    <text evidence="1">Homodimer. In the absence of ligands two homodimers may interact to form a tetramer.</text>
</comment>
<comment type="similarity">
    <text evidence="3">Belongs to the GST superfamily.</text>
</comment>
<reference key="1">
    <citation type="journal article" date="2002" name="Nature">
        <title>Genome sequence and comparative analysis of the model rodent malaria parasite Plasmodium yoelii yoelii.</title>
        <authorList>
            <person name="Carlton J.M."/>
            <person name="Angiuoli S.V."/>
            <person name="Suh B.B."/>
            <person name="Kooij T.W."/>
            <person name="Pertea M."/>
            <person name="Silva J.C."/>
            <person name="Ermolaeva M.D."/>
            <person name="Allen J.E."/>
            <person name="Selengut J.D."/>
            <person name="Koo H.L."/>
            <person name="Peterson J.D."/>
            <person name="Pop M."/>
            <person name="Kosack D.S."/>
            <person name="Shumway M.F."/>
            <person name="Bidwell S.L."/>
            <person name="Shallom S.J."/>
            <person name="van Aken S.E."/>
            <person name="Riedmuller S.B."/>
            <person name="Feldblyum T.V."/>
            <person name="Cho J.K."/>
            <person name="Quackenbush J."/>
            <person name="Sedegah M."/>
            <person name="Shoaibi A."/>
            <person name="Cummings L.M."/>
            <person name="Florens L."/>
            <person name="Yates J.R. III"/>
            <person name="Raine J.D."/>
            <person name="Sinden R.E."/>
            <person name="Harris M.A."/>
            <person name="Cunningham D.A."/>
            <person name="Preiser P.R."/>
            <person name="Bergman L.W."/>
            <person name="Vaidya A.B."/>
            <person name="van Lin L.H."/>
            <person name="Janse C.J."/>
            <person name="Waters A.P."/>
            <person name="Smith H.O."/>
            <person name="White O.R."/>
            <person name="Salzberg S.L."/>
            <person name="Venter J.C."/>
            <person name="Fraser C.M."/>
            <person name="Hoffman S.L."/>
            <person name="Gardner M.J."/>
            <person name="Carucci D.J."/>
        </authorList>
    </citation>
    <scope>NUCLEOTIDE SEQUENCE [LARGE SCALE GENOMIC DNA]</scope>
    <source>
        <strain>17XNL</strain>
    </source>
</reference>
<accession>Q7REH6</accession>
<dbReference type="EC" id="2.5.1.18" evidence="1"/>
<dbReference type="EMBL" id="AABL01001592">
    <property type="protein sequence ID" value="EAA17054.1"/>
    <property type="molecule type" value="Genomic_DNA"/>
</dbReference>
<dbReference type="SMR" id="Q7REH6"/>
<dbReference type="STRING" id="73239.Q7REH6"/>
<dbReference type="ChEMBL" id="CHEMBL1741263"/>
<dbReference type="PaxDb" id="73239-Q7REH6"/>
<dbReference type="EnsemblProtists" id="EAA17054">
    <property type="protein sequence ID" value="EAA17054"/>
    <property type="gene ID" value="EAA17054"/>
</dbReference>
<dbReference type="InParanoid" id="Q7REH6"/>
<dbReference type="BRENDA" id="2.5.1.18">
    <property type="organism ID" value="4895"/>
</dbReference>
<dbReference type="PRO" id="PR:Q7REH6"/>
<dbReference type="Proteomes" id="UP000008553">
    <property type="component" value="Unassembled WGS sequence"/>
</dbReference>
<dbReference type="GO" id="GO:0004364">
    <property type="term" value="F:glutathione transferase activity"/>
    <property type="evidence" value="ECO:0007669"/>
    <property type="project" value="UniProtKB-EC"/>
</dbReference>
<dbReference type="GO" id="GO:0006749">
    <property type="term" value="P:glutathione metabolic process"/>
    <property type="evidence" value="ECO:0007669"/>
    <property type="project" value="TreeGrafter"/>
</dbReference>
<dbReference type="CDD" id="cd03192">
    <property type="entry name" value="GST_C_Sigma_like"/>
    <property type="match status" value="1"/>
</dbReference>
<dbReference type="CDD" id="cd03039">
    <property type="entry name" value="GST_N_Sigma_like"/>
    <property type="match status" value="1"/>
</dbReference>
<dbReference type="Gene3D" id="1.20.1050.10">
    <property type="match status" value="1"/>
</dbReference>
<dbReference type="Gene3D" id="3.40.30.10">
    <property type="entry name" value="Glutaredoxin"/>
    <property type="match status" value="1"/>
</dbReference>
<dbReference type="InterPro" id="IPR010987">
    <property type="entry name" value="Glutathione-S-Trfase_C-like"/>
</dbReference>
<dbReference type="InterPro" id="IPR036282">
    <property type="entry name" value="Glutathione-S-Trfase_C_sf"/>
</dbReference>
<dbReference type="InterPro" id="IPR040079">
    <property type="entry name" value="Glutathione_S-Trfase"/>
</dbReference>
<dbReference type="InterPro" id="IPR004045">
    <property type="entry name" value="Glutathione_S-Trfase_N"/>
</dbReference>
<dbReference type="InterPro" id="IPR004046">
    <property type="entry name" value="GST_C"/>
</dbReference>
<dbReference type="InterPro" id="IPR050213">
    <property type="entry name" value="GST_superfamily"/>
</dbReference>
<dbReference type="InterPro" id="IPR036249">
    <property type="entry name" value="Thioredoxin-like_sf"/>
</dbReference>
<dbReference type="PANTHER" id="PTHR11571">
    <property type="entry name" value="GLUTATHIONE S-TRANSFERASE"/>
    <property type="match status" value="1"/>
</dbReference>
<dbReference type="PANTHER" id="PTHR11571:SF150">
    <property type="entry name" value="GLUTATHIONE S-TRANSFERASE"/>
    <property type="match status" value="1"/>
</dbReference>
<dbReference type="Pfam" id="PF14497">
    <property type="entry name" value="GST_C_3"/>
    <property type="match status" value="1"/>
</dbReference>
<dbReference type="Pfam" id="PF02798">
    <property type="entry name" value="GST_N"/>
    <property type="match status" value="1"/>
</dbReference>
<dbReference type="SFLD" id="SFLDS00019">
    <property type="entry name" value="Glutathione_Transferase_(cytos"/>
    <property type="match status" value="1"/>
</dbReference>
<dbReference type="SUPFAM" id="SSF47616">
    <property type="entry name" value="GST C-terminal domain-like"/>
    <property type="match status" value="1"/>
</dbReference>
<dbReference type="SUPFAM" id="SSF52833">
    <property type="entry name" value="Thioredoxin-like"/>
    <property type="match status" value="1"/>
</dbReference>
<dbReference type="PROSITE" id="PS50405">
    <property type="entry name" value="GST_CTER"/>
    <property type="match status" value="1"/>
</dbReference>
<dbReference type="PROSITE" id="PS50404">
    <property type="entry name" value="GST_NTER"/>
    <property type="match status" value="1"/>
</dbReference>
<feature type="chain" id="PRO_0000259969" description="Glutathione S-transferase">
    <location>
        <begin position="1"/>
        <end position="209"/>
    </location>
</feature>
<feature type="domain" description="GST N-terminal" evidence="2">
    <location>
        <begin position="7"/>
        <end position="91"/>
    </location>
</feature>
<feature type="domain" description="GST C-terminal" evidence="2">
    <location>
        <begin position="93"/>
        <end position="209"/>
    </location>
</feature>
<feature type="binding site" evidence="1">
    <location>
        <begin position="62"/>
        <end position="63"/>
    </location>
    <ligand>
        <name>glutathione</name>
        <dbReference type="ChEBI" id="CHEBI:57925"/>
    </ligand>
</feature>
<feature type="binding site" evidence="1">
    <location>
        <begin position="75"/>
        <end position="76"/>
    </location>
    <ligand>
        <name>glutathione</name>
        <dbReference type="ChEBI" id="CHEBI:57925"/>
    </ligand>
</feature>
<feature type="binding site" evidence="1">
    <location>
        <position position="109"/>
    </location>
    <ligand>
        <name>glutathione</name>
        <dbReference type="ChEBI" id="CHEBI:57925"/>
    </ligand>
</feature>
<feature type="binding site" evidence="1">
    <location>
        <position position="121"/>
    </location>
    <ligand>
        <name>glutathione</name>
        <dbReference type="ChEBI" id="CHEBI:57925"/>
    </ligand>
</feature>
<feature type="binding site" evidence="1">
    <location>
        <position position="125"/>
    </location>
    <ligand>
        <name>glutathione</name>
        <dbReference type="ChEBI" id="CHEBI:57925"/>
    </ligand>
</feature>
<organism>
    <name type="scientific">Plasmodium yoelii yoelii</name>
    <dbReference type="NCBI Taxonomy" id="73239"/>
    <lineage>
        <taxon>Eukaryota</taxon>
        <taxon>Sar</taxon>
        <taxon>Alveolata</taxon>
        <taxon>Apicomplexa</taxon>
        <taxon>Aconoidasida</taxon>
        <taxon>Haemosporida</taxon>
        <taxon>Plasmodiidae</taxon>
        <taxon>Plasmodium</taxon>
        <taxon>Plasmodium (Vinckeia)</taxon>
    </lineage>
</organism>
<keyword id="KW-1185">Reference proteome</keyword>
<keyword id="KW-0808">Transferase</keyword>